<comment type="function">
    <text evidence="1">With S4 and S12 plays an important role in translational accuracy.</text>
</comment>
<comment type="function">
    <text evidence="1">Located at the back of the 30S subunit body where it stabilizes the conformation of the head with respect to the body.</text>
</comment>
<comment type="subunit">
    <text evidence="1">Part of the 30S ribosomal subunit. Contacts proteins S4 and S8.</text>
</comment>
<comment type="domain">
    <text>The N-terminal domain interacts with the head of the 30S subunit; the C-terminal domain interacts with the body and contacts protein S4. The interaction surface between S4 and S5 is involved in control of translational fidelity.</text>
</comment>
<comment type="similarity">
    <text evidence="1">Belongs to the universal ribosomal protein uS5 family.</text>
</comment>
<reference key="1">
    <citation type="journal article" date="2004" name="Nucleic Acids Res.">
        <title>Genome sequence of Symbiobacterium thermophilum, an uncultivable bacterium that depends on microbial commensalism.</title>
        <authorList>
            <person name="Ueda K."/>
            <person name="Yamashita A."/>
            <person name="Ishikawa J."/>
            <person name="Shimada M."/>
            <person name="Watsuji T."/>
            <person name="Morimura K."/>
            <person name="Ikeda H."/>
            <person name="Hattori M."/>
            <person name="Beppu T."/>
        </authorList>
    </citation>
    <scope>NUCLEOTIDE SEQUENCE [LARGE SCALE GENOMIC DNA]</scope>
    <source>
        <strain>DSM 24528 / JCM 14929 / IAM 14863 / T</strain>
    </source>
</reference>
<accession>Q67JW0</accession>
<proteinExistence type="inferred from homology"/>
<name>RS5_SYMTH</name>
<keyword id="KW-1185">Reference proteome</keyword>
<keyword id="KW-0687">Ribonucleoprotein</keyword>
<keyword id="KW-0689">Ribosomal protein</keyword>
<keyword id="KW-0694">RNA-binding</keyword>
<keyword id="KW-0699">rRNA-binding</keyword>
<dbReference type="EMBL" id="AP006840">
    <property type="protein sequence ID" value="BAD42040.1"/>
    <property type="molecule type" value="Genomic_DNA"/>
</dbReference>
<dbReference type="RefSeq" id="WP_011197173.1">
    <property type="nucleotide sequence ID" value="NC_006177.1"/>
</dbReference>
<dbReference type="SMR" id="Q67JW0"/>
<dbReference type="STRING" id="292459.STH3058"/>
<dbReference type="KEGG" id="sth:STH3058"/>
<dbReference type="eggNOG" id="COG0098">
    <property type="taxonomic scope" value="Bacteria"/>
</dbReference>
<dbReference type="HOGENOM" id="CLU_065898_2_2_9"/>
<dbReference type="OrthoDB" id="9809045at2"/>
<dbReference type="Proteomes" id="UP000000417">
    <property type="component" value="Chromosome"/>
</dbReference>
<dbReference type="GO" id="GO:0015935">
    <property type="term" value="C:small ribosomal subunit"/>
    <property type="evidence" value="ECO:0007669"/>
    <property type="project" value="InterPro"/>
</dbReference>
<dbReference type="GO" id="GO:0019843">
    <property type="term" value="F:rRNA binding"/>
    <property type="evidence" value="ECO:0007669"/>
    <property type="project" value="UniProtKB-UniRule"/>
</dbReference>
<dbReference type="GO" id="GO:0003735">
    <property type="term" value="F:structural constituent of ribosome"/>
    <property type="evidence" value="ECO:0007669"/>
    <property type="project" value="InterPro"/>
</dbReference>
<dbReference type="GO" id="GO:0006412">
    <property type="term" value="P:translation"/>
    <property type="evidence" value="ECO:0007669"/>
    <property type="project" value="UniProtKB-UniRule"/>
</dbReference>
<dbReference type="FunFam" id="3.30.160.20:FF:000001">
    <property type="entry name" value="30S ribosomal protein S5"/>
    <property type="match status" value="1"/>
</dbReference>
<dbReference type="FunFam" id="3.30.230.10:FF:000002">
    <property type="entry name" value="30S ribosomal protein S5"/>
    <property type="match status" value="1"/>
</dbReference>
<dbReference type="Gene3D" id="3.30.160.20">
    <property type="match status" value="1"/>
</dbReference>
<dbReference type="Gene3D" id="3.30.230.10">
    <property type="match status" value="1"/>
</dbReference>
<dbReference type="HAMAP" id="MF_01307_B">
    <property type="entry name" value="Ribosomal_uS5_B"/>
    <property type="match status" value="1"/>
</dbReference>
<dbReference type="InterPro" id="IPR020568">
    <property type="entry name" value="Ribosomal_Su5_D2-typ_SF"/>
</dbReference>
<dbReference type="InterPro" id="IPR000851">
    <property type="entry name" value="Ribosomal_uS5"/>
</dbReference>
<dbReference type="InterPro" id="IPR005712">
    <property type="entry name" value="Ribosomal_uS5_bac-type"/>
</dbReference>
<dbReference type="InterPro" id="IPR005324">
    <property type="entry name" value="Ribosomal_uS5_C"/>
</dbReference>
<dbReference type="InterPro" id="IPR013810">
    <property type="entry name" value="Ribosomal_uS5_N"/>
</dbReference>
<dbReference type="InterPro" id="IPR018192">
    <property type="entry name" value="Ribosomal_uS5_N_CS"/>
</dbReference>
<dbReference type="InterPro" id="IPR014721">
    <property type="entry name" value="Ribsml_uS5_D2-typ_fold_subgr"/>
</dbReference>
<dbReference type="NCBIfam" id="TIGR01021">
    <property type="entry name" value="rpsE_bact"/>
    <property type="match status" value="1"/>
</dbReference>
<dbReference type="PANTHER" id="PTHR48277">
    <property type="entry name" value="MITOCHONDRIAL RIBOSOMAL PROTEIN S5"/>
    <property type="match status" value="1"/>
</dbReference>
<dbReference type="PANTHER" id="PTHR48277:SF1">
    <property type="entry name" value="MITOCHONDRIAL RIBOSOMAL PROTEIN S5"/>
    <property type="match status" value="1"/>
</dbReference>
<dbReference type="Pfam" id="PF00333">
    <property type="entry name" value="Ribosomal_S5"/>
    <property type="match status" value="1"/>
</dbReference>
<dbReference type="Pfam" id="PF03719">
    <property type="entry name" value="Ribosomal_S5_C"/>
    <property type="match status" value="1"/>
</dbReference>
<dbReference type="SUPFAM" id="SSF54768">
    <property type="entry name" value="dsRNA-binding domain-like"/>
    <property type="match status" value="1"/>
</dbReference>
<dbReference type="SUPFAM" id="SSF54211">
    <property type="entry name" value="Ribosomal protein S5 domain 2-like"/>
    <property type="match status" value="1"/>
</dbReference>
<dbReference type="PROSITE" id="PS00585">
    <property type="entry name" value="RIBOSOMAL_S5"/>
    <property type="match status" value="1"/>
</dbReference>
<dbReference type="PROSITE" id="PS50881">
    <property type="entry name" value="S5_DSRBD"/>
    <property type="match status" value="1"/>
</dbReference>
<gene>
    <name evidence="1" type="primary">rpsE</name>
    <name type="ordered locus">STH3058</name>
</gene>
<organism>
    <name type="scientific">Symbiobacterium thermophilum (strain DSM 24528 / JCM 14929 / IAM 14863 / T)</name>
    <dbReference type="NCBI Taxonomy" id="292459"/>
    <lineage>
        <taxon>Bacteria</taxon>
        <taxon>Bacillati</taxon>
        <taxon>Bacillota</taxon>
        <taxon>Clostridia</taxon>
        <taxon>Eubacteriales</taxon>
        <taxon>Symbiobacteriaceae</taxon>
        <taxon>Symbiobacterium</taxon>
    </lineage>
</organism>
<sequence>MARNENVQGELKEKMVDLRRVAKTVKGGRRMSFSAVVVVGDGNGRVGAGLGKAAEIPEAVRKGTEDAKKHMIKIPLNGTTIPHEVIGRFGAGKVLLKPASPGTGVIAGGAVRAVLEAAGVRDILTKSLGSNNAANQVLATLAGLRQLKSAEEVAKLRGKPVEQILG</sequence>
<evidence type="ECO:0000255" key="1">
    <source>
        <dbReference type="HAMAP-Rule" id="MF_01307"/>
    </source>
</evidence>
<evidence type="ECO:0000305" key="2"/>
<protein>
    <recommendedName>
        <fullName evidence="1">Small ribosomal subunit protein uS5</fullName>
    </recommendedName>
    <alternativeName>
        <fullName evidence="2">30S ribosomal protein S5</fullName>
    </alternativeName>
</protein>
<feature type="chain" id="PRO_0000131614" description="Small ribosomal subunit protein uS5">
    <location>
        <begin position="1"/>
        <end position="166"/>
    </location>
</feature>
<feature type="domain" description="S5 DRBM" evidence="1">
    <location>
        <begin position="11"/>
        <end position="74"/>
    </location>
</feature>